<protein>
    <recommendedName>
        <fullName evidence="1">tRNA (guanine-N(1)-)-methyltransferase</fullName>
        <ecNumber evidence="1">2.1.1.228</ecNumber>
    </recommendedName>
    <alternativeName>
        <fullName evidence="1">M1G-methyltransferase</fullName>
    </alternativeName>
    <alternativeName>
        <fullName evidence="1">tRNA [GM37] methyltransferase</fullName>
    </alternativeName>
</protein>
<accession>Q6FYH4</accession>
<gene>
    <name evidence="1" type="primary">trmD</name>
    <name type="ordered locus">BQ12740</name>
</gene>
<organism>
    <name type="scientific">Bartonella quintana (strain Toulouse)</name>
    <name type="common">Rochalimaea quintana</name>
    <dbReference type="NCBI Taxonomy" id="283165"/>
    <lineage>
        <taxon>Bacteria</taxon>
        <taxon>Pseudomonadati</taxon>
        <taxon>Pseudomonadota</taxon>
        <taxon>Alphaproteobacteria</taxon>
        <taxon>Hyphomicrobiales</taxon>
        <taxon>Bartonellaceae</taxon>
        <taxon>Bartonella</taxon>
    </lineage>
</organism>
<sequence length="232" mass="25707">MKFQARVLTLYPEMFPGFLGYSLAGQALERGIWSLETVQIRDFALDKHHSVDDTPAGGGAGMVMRADVLAAALDSCPHDSTRLLMSPRGRPFNQAYARFLACESGVTLVCGRFEGVDERIIEARKLEEVSIGDYILSGGETAALVLLDAIVRLLPGVMGNEASGKCESFENGLLEHPQYTRPSIFEGRCIPPVLTSGHHKAIADWRQQQAELLTRQRRPELYALYDKNRQKT</sequence>
<comment type="function">
    <text evidence="1">Specifically methylates guanosine-37 in various tRNAs.</text>
</comment>
<comment type="catalytic activity">
    <reaction evidence="1">
        <text>guanosine(37) in tRNA + S-adenosyl-L-methionine = N(1)-methylguanosine(37) in tRNA + S-adenosyl-L-homocysteine + H(+)</text>
        <dbReference type="Rhea" id="RHEA:36899"/>
        <dbReference type="Rhea" id="RHEA-COMP:10145"/>
        <dbReference type="Rhea" id="RHEA-COMP:10147"/>
        <dbReference type="ChEBI" id="CHEBI:15378"/>
        <dbReference type="ChEBI" id="CHEBI:57856"/>
        <dbReference type="ChEBI" id="CHEBI:59789"/>
        <dbReference type="ChEBI" id="CHEBI:73542"/>
        <dbReference type="ChEBI" id="CHEBI:74269"/>
        <dbReference type="EC" id="2.1.1.228"/>
    </reaction>
</comment>
<comment type="subunit">
    <text evidence="1">Homodimer.</text>
</comment>
<comment type="subcellular location">
    <subcellularLocation>
        <location evidence="1">Cytoplasm</location>
    </subcellularLocation>
</comment>
<comment type="similarity">
    <text evidence="1">Belongs to the RNA methyltransferase TrmD family.</text>
</comment>
<dbReference type="EC" id="2.1.1.228" evidence="1"/>
<dbReference type="EMBL" id="BX897700">
    <property type="protein sequence ID" value="CAF26733.1"/>
    <property type="molecule type" value="Genomic_DNA"/>
</dbReference>
<dbReference type="RefSeq" id="WP_011179899.1">
    <property type="nucleotide sequence ID" value="NC_005955.1"/>
</dbReference>
<dbReference type="SMR" id="Q6FYH4"/>
<dbReference type="KEGG" id="bqu:BQ12740"/>
<dbReference type="eggNOG" id="COG0336">
    <property type="taxonomic scope" value="Bacteria"/>
</dbReference>
<dbReference type="HOGENOM" id="CLU_047363_0_1_5"/>
<dbReference type="OrthoDB" id="9807416at2"/>
<dbReference type="Proteomes" id="UP000000597">
    <property type="component" value="Chromosome"/>
</dbReference>
<dbReference type="GO" id="GO:0005829">
    <property type="term" value="C:cytosol"/>
    <property type="evidence" value="ECO:0007669"/>
    <property type="project" value="TreeGrafter"/>
</dbReference>
<dbReference type="GO" id="GO:0052906">
    <property type="term" value="F:tRNA (guanine(37)-N1)-methyltransferase activity"/>
    <property type="evidence" value="ECO:0007669"/>
    <property type="project" value="UniProtKB-UniRule"/>
</dbReference>
<dbReference type="GO" id="GO:0002939">
    <property type="term" value="P:tRNA N1-guanine methylation"/>
    <property type="evidence" value="ECO:0007669"/>
    <property type="project" value="TreeGrafter"/>
</dbReference>
<dbReference type="CDD" id="cd18080">
    <property type="entry name" value="TrmD-like"/>
    <property type="match status" value="1"/>
</dbReference>
<dbReference type="FunFam" id="3.40.1280.10:FF:000001">
    <property type="entry name" value="tRNA (guanine-N(1)-)-methyltransferase"/>
    <property type="match status" value="1"/>
</dbReference>
<dbReference type="Gene3D" id="3.40.1280.10">
    <property type="match status" value="1"/>
</dbReference>
<dbReference type="Gene3D" id="1.10.1270.20">
    <property type="entry name" value="tRNA(m1g37)methyltransferase, domain 2"/>
    <property type="match status" value="1"/>
</dbReference>
<dbReference type="HAMAP" id="MF_00605">
    <property type="entry name" value="TrmD"/>
    <property type="match status" value="1"/>
</dbReference>
<dbReference type="InterPro" id="IPR029028">
    <property type="entry name" value="Alpha/beta_knot_MTases"/>
</dbReference>
<dbReference type="InterPro" id="IPR023148">
    <property type="entry name" value="tRNA_m1G_MeTrfase_C_sf"/>
</dbReference>
<dbReference type="InterPro" id="IPR002649">
    <property type="entry name" value="tRNA_m1G_MeTrfase_TrmD"/>
</dbReference>
<dbReference type="InterPro" id="IPR029026">
    <property type="entry name" value="tRNA_m1G_MTases_N"/>
</dbReference>
<dbReference type="InterPro" id="IPR016009">
    <property type="entry name" value="tRNA_MeTrfase_TRMD/TRM10"/>
</dbReference>
<dbReference type="NCBIfam" id="NF000648">
    <property type="entry name" value="PRK00026.1"/>
    <property type="match status" value="1"/>
</dbReference>
<dbReference type="NCBIfam" id="TIGR00088">
    <property type="entry name" value="trmD"/>
    <property type="match status" value="1"/>
</dbReference>
<dbReference type="PANTHER" id="PTHR46417">
    <property type="entry name" value="TRNA (GUANINE-N(1)-)-METHYLTRANSFERASE"/>
    <property type="match status" value="1"/>
</dbReference>
<dbReference type="PANTHER" id="PTHR46417:SF1">
    <property type="entry name" value="TRNA (GUANINE-N(1)-)-METHYLTRANSFERASE"/>
    <property type="match status" value="1"/>
</dbReference>
<dbReference type="Pfam" id="PF01746">
    <property type="entry name" value="tRNA_m1G_MT"/>
    <property type="match status" value="1"/>
</dbReference>
<dbReference type="PIRSF" id="PIRSF000386">
    <property type="entry name" value="tRNA_mtase"/>
    <property type="match status" value="1"/>
</dbReference>
<dbReference type="SUPFAM" id="SSF75217">
    <property type="entry name" value="alpha/beta knot"/>
    <property type="match status" value="1"/>
</dbReference>
<reference key="1">
    <citation type="journal article" date="2004" name="Proc. Natl. Acad. Sci. U.S.A.">
        <title>The louse-borne human pathogen Bartonella quintana is a genomic derivative of the zoonotic agent Bartonella henselae.</title>
        <authorList>
            <person name="Alsmark U.C.M."/>
            <person name="Frank A.C."/>
            <person name="Karlberg E.O."/>
            <person name="Legault B.-A."/>
            <person name="Ardell D.H."/>
            <person name="Canbaeck B."/>
            <person name="Eriksson A.-S."/>
            <person name="Naeslund A.K."/>
            <person name="Handley S.A."/>
            <person name="Huvet M."/>
            <person name="La Scola B."/>
            <person name="Holmberg M."/>
            <person name="Andersson S.G.E."/>
        </authorList>
    </citation>
    <scope>NUCLEOTIDE SEQUENCE [LARGE SCALE GENOMIC DNA]</scope>
    <source>
        <strain>Toulouse</strain>
    </source>
</reference>
<feature type="chain" id="PRO_0000060332" description="tRNA (guanine-N(1)-)-methyltransferase">
    <location>
        <begin position="1"/>
        <end position="232"/>
    </location>
</feature>
<feature type="binding site" evidence="1">
    <location>
        <position position="111"/>
    </location>
    <ligand>
        <name>S-adenosyl-L-methionine</name>
        <dbReference type="ChEBI" id="CHEBI:59789"/>
    </ligand>
</feature>
<feature type="binding site" evidence="1">
    <location>
        <begin position="131"/>
        <end position="136"/>
    </location>
    <ligand>
        <name>S-adenosyl-L-methionine</name>
        <dbReference type="ChEBI" id="CHEBI:59789"/>
    </ligand>
</feature>
<proteinExistence type="inferred from homology"/>
<keyword id="KW-0963">Cytoplasm</keyword>
<keyword id="KW-0489">Methyltransferase</keyword>
<keyword id="KW-0949">S-adenosyl-L-methionine</keyword>
<keyword id="KW-0808">Transferase</keyword>
<keyword id="KW-0819">tRNA processing</keyword>
<evidence type="ECO:0000255" key="1">
    <source>
        <dbReference type="HAMAP-Rule" id="MF_00605"/>
    </source>
</evidence>
<name>TRMD_BARQU</name>